<gene>
    <name evidence="1" type="primary">rpsK</name>
    <name type="ordered locus">Strop_3897</name>
</gene>
<feature type="chain" id="PRO_1000086209" description="Small ribosomal subunit protein uS11">
    <location>
        <begin position="1"/>
        <end position="135"/>
    </location>
</feature>
<feature type="region of interest" description="Disordered" evidence="2">
    <location>
        <begin position="1"/>
        <end position="22"/>
    </location>
</feature>
<feature type="compositionally biased region" description="Low complexity" evidence="2">
    <location>
        <begin position="1"/>
        <end position="11"/>
    </location>
</feature>
<name>RS11_SALTO</name>
<organism>
    <name type="scientific">Salinispora tropica (strain ATCC BAA-916 / DSM 44818 / JCM 13857 / NBRC 105044 / CNB-440)</name>
    <dbReference type="NCBI Taxonomy" id="369723"/>
    <lineage>
        <taxon>Bacteria</taxon>
        <taxon>Bacillati</taxon>
        <taxon>Actinomycetota</taxon>
        <taxon>Actinomycetes</taxon>
        <taxon>Micromonosporales</taxon>
        <taxon>Micromonosporaceae</taxon>
        <taxon>Salinispora</taxon>
    </lineage>
</organism>
<comment type="function">
    <text evidence="1">Located on the platform of the 30S subunit, it bridges several disparate RNA helices of the 16S rRNA. Forms part of the Shine-Dalgarno cleft in the 70S ribosome.</text>
</comment>
<comment type="subunit">
    <text evidence="1">Part of the 30S ribosomal subunit. Interacts with proteins S7 and S18. Binds to IF-3.</text>
</comment>
<comment type="similarity">
    <text evidence="1">Belongs to the universal ribosomal protein uS11 family.</text>
</comment>
<proteinExistence type="inferred from homology"/>
<dbReference type="EMBL" id="CP000667">
    <property type="protein sequence ID" value="ABP56327.1"/>
    <property type="molecule type" value="Genomic_DNA"/>
</dbReference>
<dbReference type="RefSeq" id="WP_012015102.1">
    <property type="nucleotide sequence ID" value="NC_009380.1"/>
</dbReference>
<dbReference type="SMR" id="A4XBM0"/>
<dbReference type="STRING" id="369723.Strop_3897"/>
<dbReference type="KEGG" id="stp:Strop_3897"/>
<dbReference type="PATRIC" id="fig|369723.5.peg.4022"/>
<dbReference type="eggNOG" id="COG0100">
    <property type="taxonomic scope" value="Bacteria"/>
</dbReference>
<dbReference type="HOGENOM" id="CLU_072439_5_0_11"/>
<dbReference type="Proteomes" id="UP000000235">
    <property type="component" value="Chromosome"/>
</dbReference>
<dbReference type="GO" id="GO:1990904">
    <property type="term" value="C:ribonucleoprotein complex"/>
    <property type="evidence" value="ECO:0007669"/>
    <property type="project" value="UniProtKB-KW"/>
</dbReference>
<dbReference type="GO" id="GO:0005840">
    <property type="term" value="C:ribosome"/>
    <property type="evidence" value="ECO:0007669"/>
    <property type="project" value="UniProtKB-KW"/>
</dbReference>
<dbReference type="GO" id="GO:0019843">
    <property type="term" value="F:rRNA binding"/>
    <property type="evidence" value="ECO:0007669"/>
    <property type="project" value="UniProtKB-UniRule"/>
</dbReference>
<dbReference type="GO" id="GO:0003735">
    <property type="term" value="F:structural constituent of ribosome"/>
    <property type="evidence" value="ECO:0007669"/>
    <property type="project" value="InterPro"/>
</dbReference>
<dbReference type="GO" id="GO:0006412">
    <property type="term" value="P:translation"/>
    <property type="evidence" value="ECO:0007669"/>
    <property type="project" value="UniProtKB-UniRule"/>
</dbReference>
<dbReference type="FunFam" id="3.30.420.80:FF:000001">
    <property type="entry name" value="30S ribosomal protein S11"/>
    <property type="match status" value="1"/>
</dbReference>
<dbReference type="Gene3D" id="3.30.420.80">
    <property type="entry name" value="Ribosomal protein S11"/>
    <property type="match status" value="1"/>
</dbReference>
<dbReference type="HAMAP" id="MF_01310">
    <property type="entry name" value="Ribosomal_uS11"/>
    <property type="match status" value="1"/>
</dbReference>
<dbReference type="InterPro" id="IPR001971">
    <property type="entry name" value="Ribosomal_uS11"/>
</dbReference>
<dbReference type="InterPro" id="IPR019981">
    <property type="entry name" value="Ribosomal_uS11_bac-type"/>
</dbReference>
<dbReference type="InterPro" id="IPR018102">
    <property type="entry name" value="Ribosomal_uS11_CS"/>
</dbReference>
<dbReference type="InterPro" id="IPR036967">
    <property type="entry name" value="Ribosomal_uS11_sf"/>
</dbReference>
<dbReference type="NCBIfam" id="NF003698">
    <property type="entry name" value="PRK05309.1"/>
    <property type="match status" value="1"/>
</dbReference>
<dbReference type="NCBIfam" id="TIGR03632">
    <property type="entry name" value="uS11_bact"/>
    <property type="match status" value="1"/>
</dbReference>
<dbReference type="PANTHER" id="PTHR11759">
    <property type="entry name" value="40S RIBOSOMAL PROTEIN S14/30S RIBOSOMAL PROTEIN S11"/>
    <property type="match status" value="1"/>
</dbReference>
<dbReference type="Pfam" id="PF00411">
    <property type="entry name" value="Ribosomal_S11"/>
    <property type="match status" value="1"/>
</dbReference>
<dbReference type="PIRSF" id="PIRSF002131">
    <property type="entry name" value="Ribosomal_S11"/>
    <property type="match status" value="1"/>
</dbReference>
<dbReference type="SUPFAM" id="SSF53137">
    <property type="entry name" value="Translational machinery components"/>
    <property type="match status" value="1"/>
</dbReference>
<dbReference type="PROSITE" id="PS00054">
    <property type="entry name" value="RIBOSOMAL_S11"/>
    <property type="match status" value="1"/>
</dbReference>
<sequence length="135" mass="14402">MPPKARAGAAVKKVRRKERKNVAHGQAHIKSTFNNTIVSVTDPTGAVISWASAGQVGFKGSRKSTPFAAQLAAEAAARRAMEHGMRKVDVFVKGPGSGRETAIRSLQAVGLEVGQISDVTPQPHNGCRPPKRRRV</sequence>
<keyword id="KW-1185">Reference proteome</keyword>
<keyword id="KW-0687">Ribonucleoprotein</keyword>
<keyword id="KW-0689">Ribosomal protein</keyword>
<keyword id="KW-0694">RNA-binding</keyword>
<keyword id="KW-0699">rRNA-binding</keyword>
<evidence type="ECO:0000255" key="1">
    <source>
        <dbReference type="HAMAP-Rule" id="MF_01310"/>
    </source>
</evidence>
<evidence type="ECO:0000256" key="2">
    <source>
        <dbReference type="SAM" id="MobiDB-lite"/>
    </source>
</evidence>
<evidence type="ECO:0000305" key="3"/>
<protein>
    <recommendedName>
        <fullName evidence="1">Small ribosomal subunit protein uS11</fullName>
    </recommendedName>
    <alternativeName>
        <fullName evidence="3">30S ribosomal protein S11</fullName>
    </alternativeName>
</protein>
<accession>A4XBM0</accession>
<reference key="1">
    <citation type="journal article" date="2007" name="Proc. Natl. Acad. Sci. U.S.A.">
        <title>Genome sequencing reveals complex secondary metabolome in the marine actinomycete Salinispora tropica.</title>
        <authorList>
            <person name="Udwary D.W."/>
            <person name="Zeigler L."/>
            <person name="Asolkar R.N."/>
            <person name="Singan V."/>
            <person name="Lapidus A."/>
            <person name="Fenical W."/>
            <person name="Jensen P.R."/>
            <person name="Moore B.S."/>
        </authorList>
    </citation>
    <scope>NUCLEOTIDE SEQUENCE [LARGE SCALE GENOMIC DNA]</scope>
    <source>
        <strain>ATCC BAA-916 / DSM 44818 / JCM 13857 / NBRC 105044 / CNB-440</strain>
    </source>
</reference>